<sequence length="136" mass="15501">MARTKQTARKSTGGKAPRKQLATKAARKSAPATGGVKKPHRYRPGTVALREIRRYQKSTELLIRKLPFQRLVREIAQDFKTELRFQSSAVMALQEASEAYLVRLFEDTNLCAIHAKRVTIMPKDIQLARRIRGERA</sequence>
<dbReference type="EMBL" id="X03952">
    <property type="protein sequence ID" value="CAA27582.1"/>
    <property type="molecule type" value="Genomic_DNA"/>
</dbReference>
<dbReference type="PIR" id="A02629">
    <property type="entry name" value="HSUR3P"/>
</dbReference>
<dbReference type="RefSeq" id="NP_999712.1">
    <property type="nucleotide sequence ID" value="NM_214547.1"/>
</dbReference>
<dbReference type="PDB" id="1PFB">
    <property type="method" value="X-ray"/>
    <property type="resolution" value="1.40 A"/>
    <property type="chains" value="B=21-31"/>
</dbReference>
<dbReference type="PDBsum" id="1PFB"/>
<dbReference type="BMRB" id="P06352"/>
<dbReference type="SMR" id="P06352"/>
<dbReference type="STRING" id="7668.P06352"/>
<dbReference type="EnsemblMetazoa" id="NM_214547">
    <property type="protein sequence ID" value="NP_999712"/>
    <property type="gene ID" value="LOC373340"/>
</dbReference>
<dbReference type="GeneID" id="373340"/>
<dbReference type="KEGG" id="spu:373340"/>
<dbReference type="eggNOG" id="KOG1745">
    <property type="taxonomic scope" value="Eukaryota"/>
</dbReference>
<dbReference type="HOGENOM" id="CLU_078295_4_0_1"/>
<dbReference type="InParanoid" id="P06352"/>
<dbReference type="OMA" id="SVISCDH"/>
<dbReference type="OrthoDB" id="9929128at2759"/>
<dbReference type="PhylomeDB" id="P06352"/>
<dbReference type="EvolutionaryTrace" id="P06352"/>
<dbReference type="Proteomes" id="UP000007110">
    <property type="component" value="Unassembled WGS sequence"/>
</dbReference>
<dbReference type="GO" id="GO:0000786">
    <property type="term" value="C:nucleosome"/>
    <property type="evidence" value="ECO:0007669"/>
    <property type="project" value="UniProtKB-KW"/>
</dbReference>
<dbReference type="GO" id="GO:0005634">
    <property type="term" value="C:nucleus"/>
    <property type="evidence" value="ECO:0007669"/>
    <property type="project" value="UniProtKB-SubCell"/>
</dbReference>
<dbReference type="GO" id="GO:0003677">
    <property type="term" value="F:DNA binding"/>
    <property type="evidence" value="ECO:0007669"/>
    <property type="project" value="UniProtKB-KW"/>
</dbReference>
<dbReference type="GO" id="GO:0046982">
    <property type="term" value="F:protein heterodimerization activity"/>
    <property type="evidence" value="ECO:0007669"/>
    <property type="project" value="InterPro"/>
</dbReference>
<dbReference type="GO" id="GO:0030527">
    <property type="term" value="F:structural constituent of chromatin"/>
    <property type="evidence" value="ECO:0007669"/>
    <property type="project" value="InterPro"/>
</dbReference>
<dbReference type="CDD" id="cd22911">
    <property type="entry name" value="HFD_H3"/>
    <property type="match status" value="1"/>
</dbReference>
<dbReference type="FunFam" id="1.10.20.10:FF:000078">
    <property type="entry name" value="Histone H3"/>
    <property type="match status" value="1"/>
</dbReference>
<dbReference type="FunFam" id="1.10.20.10:FF:000044">
    <property type="entry name" value="Histone H3.3"/>
    <property type="match status" value="1"/>
</dbReference>
<dbReference type="Gene3D" id="1.10.20.10">
    <property type="entry name" value="Histone, subunit A"/>
    <property type="match status" value="1"/>
</dbReference>
<dbReference type="InterPro" id="IPR009072">
    <property type="entry name" value="Histone-fold"/>
</dbReference>
<dbReference type="InterPro" id="IPR007125">
    <property type="entry name" value="Histone_H2A/H2B/H3"/>
</dbReference>
<dbReference type="InterPro" id="IPR000164">
    <property type="entry name" value="Histone_H3/CENP-A"/>
</dbReference>
<dbReference type="PANTHER" id="PTHR11426">
    <property type="entry name" value="HISTONE H3"/>
    <property type="match status" value="1"/>
</dbReference>
<dbReference type="Pfam" id="PF00125">
    <property type="entry name" value="Histone"/>
    <property type="match status" value="1"/>
</dbReference>
<dbReference type="PRINTS" id="PR00622">
    <property type="entry name" value="HISTONEH3"/>
</dbReference>
<dbReference type="SMART" id="SM00428">
    <property type="entry name" value="H3"/>
    <property type="match status" value="1"/>
</dbReference>
<dbReference type="SUPFAM" id="SSF47113">
    <property type="entry name" value="Histone-fold"/>
    <property type="match status" value="1"/>
</dbReference>
<dbReference type="PROSITE" id="PS00322">
    <property type="entry name" value="HISTONE_H3_1"/>
    <property type="match status" value="1"/>
</dbReference>
<dbReference type="PROSITE" id="PS00959">
    <property type="entry name" value="HISTONE_H3_2"/>
    <property type="match status" value="1"/>
</dbReference>
<evidence type="ECO:0000250" key="1"/>
<evidence type="ECO:0000256" key="2">
    <source>
        <dbReference type="SAM" id="MobiDB-lite"/>
    </source>
</evidence>
<evidence type="ECO:0000305" key="3"/>
<evidence type="ECO:0007829" key="4">
    <source>
        <dbReference type="PDB" id="1PFB"/>
    </source>
</evidence>
<reference key="1">
    <citation type="journal article" date="1986" name="Nucleic Acids Res.">
        <title>Sequence, organization and expression of late embryonic H3 and H4 histone genes from the sea urchin, Strongylocentrotus purpuratus.</title>
        <authorList>
            <person name="Kaumeyer J.F."/>
            <person name="Weinberg E.S."/>
        </authorList>
    </citation>
    <scope>NUCLEOTIDE SEQUENCE [GENOMIC DNA]</scope>
</reference>
<organism>
    <name type="scientific">Strongylocentrotus purpuratus</name>
    <name type="common">Purple sea urchin</name>
    <dbReference type="NCBI Taxonomy" id="7668"/>
    <lineage>
        <taxon>Eukaryota</taxon>
        <taxon>Metazoa</taxon>
        <taxon>Echinodermata</taxon>
        <taxon>Eleutherozoa</taxon>
        <taxon>Echinozoa</taxon>
        <taxon>Echinoidea</taxon>
        <taxon>Euechinoidea</taxon>
        <taxon>Echinacea</taxon>
        <taxon>Camarodonta</taxon>
        <taxon>Echinidea</taxon>
        <taxon>Strongylocentrotidae</taxon>
        <taxon>Strongylocentrotus</taxon>
    </lineage>
</organism>
<protein>
    <recommendedName>
        <fullName>Histone H3, embryonic</fullName>
    </recommendedName>
</protein>
<name>H3_STRPU</name>
<accession>P06352</accession>
<comment type="function">
    <text>Core component of nucleosome. Nucleosomes wrap and compact DNA into chromatin, limiting DNA accessibility to the cellular machineries which require DNA as a template. Histones thereby play a central role in transcription regulation, DNA repair, DNA replication and chromosomal stability. DNA accessibility is regulated via a complex set of post-translational modifications of histones, also called histone code, and nucleosome remodeling.</text>
</comment>
<comment type="subunit">
    <text>The nucleosome is a histone octamer containing two molecules each of H2A, H2B, H3 and H4 assembled in one H3-H4 heterotetramer and two H2A-H2B heterodimers. The octamer wraps approximately 147 bp of DNA.</text>
</comment>
<comment type="subcellular location">
    <subcellularLocation>
        <location evidence="1">Nucleus</location>
    </subcellularLocation>
    <subcellularLocation>
        <location evidence="1">Chromosome</location>
    </subcellularLocation>
</comment>
<comment type="developmental stage">
    <text>This histone is expressed during late embryonic development.</text>
</comment>
<comment type="PTM">
    <text evidence="1">Acetylation is generally linked to gene activation.</text>
</comment>
<comment type="PTM">
    <text evidence="1">Methylation at Lys-5 is linked to gene activation. Methylation at Lys-10 is linked to gene repression (By similarity).</text>
</comment>
<comment type="similarity">
    <text evidence="3">Belongs to the histone H3 family.</text>
</comment>
<proteinExistence type="evidence at protein level"/>
<keyword id="KW-0002">3D-structure</keyword>
<keyword id="KW-0007">Acetylation</keyword>
<keyword id="KW-0158">Chromosome</keyword>
<keyword id="KW-0238">DNA-binding</keyword>
<keyword id="KW-0488">Methylation</keyword>
<keyword id="KW-0544">Nucleosome core</keyword>
<keyword id="KW-0539">Nucleus</keyword>
<keyword id="KW-0597">Phosphoprotein</keyword>
<keyword id="KW-1185">Reference proteome</keyword>
<feature type="initiator methionine" description="Removed" evidence="1">
    <location>
        <position position="1"/>
    </location>
</feature>
<feature type="chain" id="PRO_0000221320" description="Histone H3, embryonic">
    <location>
        <begin position="2"/>
        <end position="136"/>
    </location>
</feature>
<feature type="region of interest" description="Disordered" evidence="2">
    <location>
        <begin position="1"/>
        <end position="43"/>
    </location>
</feature>
<feature type="modified residue" description="N6-methylated lysine" evidence="1">
    <location>
        <position position="5"/>
    </location>
</feature>
<feature type="modified residue" description="N6-acetyllysine; alternate" evidence="1">
    <location>
        <position position="10"/>
    </location>
</feature>
<feature type="modified residue" description="N6-methylated lysine; alternate" evidence="1">
    <location>
        <position position="10"/>
    </location>
</feature>
<feature type="modified residue" description="Phosphoserine" evidence="1">
    <location>
        <position position="11"/>
    </location>
</feature>
<feature type="modified residue" description="N6-acetyllysine" evidence="1">
    <location>
        <position position="15"/>
    </location>
</feature>
<feature type="modified residue" description="N6-acetyllysine" evidence="1">
    <location>
        <position position="24"/>
    </location>
</feature>
<feature type="modified residue" description="N6-methylated lysine" evidence="1">
    <location>
        <position position="28"/>
    </location>
</feature>
<feature type="modified residue" description="N6-methylated lysine" evidence="1">
    <location>
        <position position="37"/>
    </location>
</feature>
<feature type="modified residue" description="N6-methylated lysine" evidence="1">
    <location>
        <position position="80"/>
    </location>
</feature>
<feature type="strand" evidence="4">
    <location>
        <begin position="24"/>
        <end position="28"/>
    </location>
</feature>